<keyword id="KW-0878">Amphibian defense peptide</keyword>
<keyword id="KW-0044">Antibiotic</keyword>
<keyword id="KW-0929">Antimicrobial</keyword>
<keyword id="KW-0903">Direct protein sequencing</keyword>
<keyword id="KW-1015">Disulfide bond</keyword>
<keyword id="KW-0395">Inflammatory response</keyword>
<keyword id="KW-0467">Mast cell degranulation</keyword>
<keyword id="KW-0964">Secreted</keyword>
<accession>P85059</accession>
<reference evidence="5" key="1">
    <citation type="journal article" date="2006" name="Peptides">
        <title>Histamine-releasing and antimicrobial peptides from the skin secretions of the dusky gopher frog, Rana sevosa.</title>
        <authorList>
            <person name="Graham C."/>
            <person name="Richter S.C."/>
            <person name="McClean S."/>
            <person name="O'Kane E."/>
            <person name="Flatt P.R."/>
            <person name="Shaw C."/>
        </authorList>
    </citation>
    <scope>PROTEIN SEQUENCE</scope>
    <scope>FUNCTION</scope>
    <scope>SUBCELLULAR LOCATION</scope>
    <scope>TISSUE SPECIFICITY</scope>
    <scope>MASS SPECTROMETRY</scope>
    <source>
        <tissue evidence="3">Skin secretion</tissue>
    </source>
</reference>
<name>ES1SA_LITSE</name>
<feature type="peptide" id="PRO_0000271244" description="Esculentin-1SEa">
    <location>
        <begin position="1"/>
        <end position="46"/>
    </location>
</feature>
<feature type="disulfide bond" evidence="1">
    <location>
        <begin position="40"/>
        <end position="46"/>
    </location>
</feature>
<comment type="function">
    <text evidence="3">Mast cell degranulating peptide. Causes histamine release from rat peritoneal mast cells in vitro. Has antibacterial activity against the Gram-negative bacterium E.coli K12 and Gram-positive bacterium M.luteus NCT C2665.</text>
</comment>
<comment type="subcellular location">
    <subcellularLocation>
        <location evidence="3">Secreted</location>
    </subcellularLocation>
</comment>
<comment type="tissue specificity">
    <text evidence="3">Expressed by the skin glands.</text>
</comment>
<comment type="mass spectrometry"/>
<comment type="mass spectrometry"/>
<comment type="similarity">
    <text evidence="2">Belongs to the frog skin active peptide (FSAP) family. Esculentin subfamily.</text>
</comment>
<comment type="online information" name="The antimicrobial peptide database">
    <link uri="https://wangapd3.com/database/query_output.php?ID=00573"/>
</comment>
<dbReference type="SMR" id="P85059"/>
<dbReference type="GO" id="GO:0005576">
    <property type="term" value="C:extracellular region"/>
    <property type="evidence" value="ECO:0000314"/>
    <property type="project" value="UniProtKB"/>
</dbReference>
<dbReference type="GO" id="GO:0050829">
    <property type="term" value="P:defense response to Gram-negative bacterium"/>
    <property type="evidence" value="ECO:0000314"/>
    <property type="project" value="UniProtKB"/>
</dbReference>
<dbReference type="GO" id="GO:0050830">
    <property type="term" value="P:defense response to Gram-positive bacterium"/>
    <property type="evidence" value="ECO:0000314"/>
    <property type="project" value="UniProtKB"/>
</dbReference>
<dbReference type="GO" id="GO:0002553">
    <property type="term" value="P:histamine secretion by mast cell"/>
    <property type="evidence" value="ECO:0000314"/>
    <property type="project" value="UniProtKB"/>
</dbReference>
<dbReference type="GO" id="GO:0043306">
    <property type="term" value="P:positive regulation of mast cell degranulation"/>
    <property type="evidence" value="ECO:0000314"/>
    <property type="project" value="UniProtKB"/>
</dbReference>
<evidence type="ECO:0000250" key="1">
    <source>
        <dbReference type="UniProtKB" id="P32414"/>
    </source>
</evidence>
<evidence type="ECO:0000255" key="2"/>
<evidence type="ECO:0000269" key="3">
    <source>
    </source>
</evidence>
<evidence type="ECO:0000303" key="4">
    <source>
    </source>
</evidence>
<evidence type="ECO:0000305" key="5"/>
<sequence>GLFSKFNKKKIKSGLIKIIKTAGKEAGLEALRTGIDVIGCKIKGEC</sequence>
<organism>
    <name type="scientific">Lithobates sevosus</name>
    <name type="common">Dusky gopher frog</name>
    <name type="synonym">Rana sevosa</name>
    <dbReference type="NCBI Taxonomy" id="299683"/>
    <lineage>
        <taxon>Eukaryota</taxon>
        <taxon>Metazoa</taxon>
        <taxon>Chordata</taxon>
        <taxon>Craniata</taxon>
        <taxon>Vertebrata</taxon>
        <taxon>Euteleostomi</taxon>
        <taxon>Amphibia</taxon>
        <taxon>Batrachia</taxon>
        <taxon>Anura</taxon>
        <taxon>Neobatrachia</taxon>
        <taxon>Ranoidea</taxon>
        <taxon>Ranidae</taxon>
        <taxon>Lithobates</taxon>
    </lineage>
</organism>
<protein>
    <recommendedName>
        <fullName evidence="4">Esculentin-1SEa</fullName>
    </recommendedName>
</protein>
<proteinExistence type="evidence at protein level"/>